<sequence length="92" mass="10130">MLRETSEGVILSVIVAPNARETKIVGIDGTRGRVKVNVAAPPVKGKANKELMKFFKKLFGAEVVIVRGETSREKDLLIKGITKKEVIEKLEL</sequence>
<organism>
    <name type="scientific">Pyrococcus furiosus (strain ATCC 43587 / DSM 3638 / JCM 8422 / Vc1)</name>
    <dbReference type="NCBI Taxonomy" id="186497"/>
    <lineage>
        <taxon>Archaea</taxon>
        <taxon>Methanobacteriati</taxon>
        <taxon>Methanobacteriota</taxon>
        <taxon>Thermococci</taxon>
        <taxon>Thermococcales</taxon>
        <taxon>Thermococcaceae</taxon>
        <taxon>Pyrococcus</taxon>
    </lineage>
</organism>
<proteinExistence type="inferred from homology"/>
<dbReference type="EMBL" id="AE009950">
    <property type="protein sequence ID" value="AAL81889.1"/>
    <property type="molecule type" value="Genomic_DNA"/>
</dbReference>
<dbReference type="RefSeq" id="WP_011012906.1">
    <property type="nucleotide sequence ID" value="NZ_CP023154.1"/>
</dbReference>
<dbReference type="SMR" id="Q8U052"/>
<dbReference type="STRING" id="186497.PF1765"/>
<dbReference type="PaxDb" id="186497-PF1765"/>
<dbReference type="KEGG" id="pfu:PF1765"/>
<dbReference type="PATRIC" id="fig|186497.12.peg.1836"/>
<dbReference type="eggNOG" id="arCOG04058">
    <property type="taxonomic scope" value="Archaea"/>
</dbReference>
<dbReference type="HOGENOM" id="CLU_130694_5_0_2"/>
<dbReference type="OrthoDB" id="53248at2157"/>
<dbReference type="PhylomeDB" id="Q8U052"/>
<dbReference type="Proteomes" id="UP000001013">
    <property type="component" value="Chromosome"/>
</dbReference>
<dbReference type="GO" id="GO:0005737">
    <property type="term" value="C:cytoplasm"/>
    <property type="evidence" value="ECO:0007669"/>
    <property type="project" value="TreeGrafter"/>
</dbReference>
<dbReference type="Gene3D" id="3.30.1200.10">
    <property type="entry name" value="YggU-like"/>
    <property type="match status" value="1"/>
</dbReference>
<dbReference type="HAMAP" id="MF_00634">
    <property type="entry name" value="UPF0235"/>
    <property type="match status" value="1"/>
</dbReference>
<dbReference type="InterPro" id="IPR003746">
    <property type="entry name" value="DUF167"/>
</dbReference>
<dbReference type="InterPro" id="IPR036591">
    <property type="entry name" value="YggU-like_sf"/>
</dbReference>
<dbReference type="NCBIfam" id="TIGR00251">
    <property type="entry name" value="DUF167 family protein"/>
    <property type="match status" value="1"/>
</dbReference>
<dbReference type="PANTHER" id="PTHR13420">
    <property type="entry name" value="UPF0235 PROTEIN C15ORF40"/>
    <property type="match status" value="1"/>
</dbReference>
<dbReference type="PANTHER" id="PTHR13420:SF7">
    <property type="entry name" value="UPF0235 PROTEIN C15ORF40"/>
    <property type="match status" value="1"/>
</dbReference>
<dbReference type="Pfam" id="PF02594">
    <property type="entry name" value="DUF167"/>
    <property type="match status" value="1"/>
</dbReference>
<dbReference type="SMART" id="SM01152">
    <property type="entry name" value="DUF167"/>
    <property type="match status" value="1"/>
</dbReference>
<dbReference type="SUPFAM" id="SSF69786">
    <property type="entry name" value="YggU-like"/>
    <property type="match status" value="1"/>
</dbReference>
<accession>Q8U052</accession>
<protein>
    <recommendedName>
        <fullName evidence="1">UPF0235 protein PF1765</fullName>
    </recommendedName>
</protein>
<gene>
    <name type="ordered locus">PF1765</name>
</gene>
<reference key="1">
    <citation type="journal article" date="1999" name="Genetics">
        <title>Divergence of the hyperthermophilic archaea Pyrococcus furiosus and P. horikoshii inferred from complete genomic sequences.</title>
        <authorList>
            <person name="Maeder D.L."/>
            <person name="Weiss R.B."/>
            <person name="Dunn D.M."/>
            <person name="Cherry J.L."/>
            <person name="Gonzalez J.M."/>
            <person name="DiRuggiero J."/>
            <person name="Robb F.T."/>
        </authorList>
    </citation>
    <scope>NUCLEOTIDE SEQUENCE [LARGE SCALE GENOMIC DNA]</scope>
    <source>
        <strain>ATCC 43587 / DSM 3638 / JCM 8422 / Vc1</strain>
    </source>
</reference>
<comment type="similarity">
    <text evidence="1">Belongs to the UPF0235 family.</text>
</comment>
<keyword id="KW-1185">Reference proteome</keyword>
<evidence type="ECO:0000255" key="1">
    <source>
        <dbReference type="HAMAP-Rule" id="MF_00634"/>
    </source>
</evidence>
<name>Y1765_PYRFU</name>
<feature type="chain" id="PRO_0000139473" description="UPF0235 protein PF1765">
    <location>
        <begin position="1"/>
        <end position="92"/>
    </location>
</feature>